<keyword id="KW-0963">Cytoplasm</keyword>
<keyword id="KW-0342">GTP-binding</keyword>
<keyword id="KW-0547">Nucleotide-binding</keyword>
<keyword id="KW-0648">Protein biosynthesis</keyword>
<name>RF3_LISMH</name>
<evidence type="ECO:0000255" key="1">
    <source>
        <dbReference type="HAMAP-Rule" id="MF_00072"/>
    </source>
</evidence>
<reference key="1">
    <citation type="journal article" date="2011" name="J. Bacteriol.">
        <title>Genome sequence of lineage III Listeria monocytogenes strain HCC23.</title>
        <authorList>
            <person name="Steele C.L."/>
            <person name="Donaldson J.R."/>
            <person name="Paul D."/>
            <person name="Banes M.M."/>
            <person name="Arick T."/>
            <person name="Bridges S.M."/>
            <person name="Lawrence M.L."/>
        </authorList>
    </citation>
    <scope>NUCLEOTIDE SEQUENCE [LARGE SCALE GENOMIC DNA]</scope>
    <source>
        <strain>HCC23</strain>
    </source>
</reference>
<sequence length="522" mass="59434">MSQDLQKEVASRKTFAIISHPDAGKTTITEQLLLFGGVIRSAGTVKGKKSGKFATSDWMEIEKQRGISVTSSVMQFDYNGSRINILDTPGHSDFSEDTYRTLMAVDSAVMVIDAAKGIEAQTLKLFKVCRMRGIPIFTFINKMDRQGKMPLELLAELEEVLGIESYPMNWPIGMGKELAGLYDRYHRVIEQYRSEEDERFLPLGEDGDLKEAHAIQKSLYYDQALEEIMLLDEAGNDFSRERIIAGEQTPVFFGSALTNFGVETFLRTFVDFAPSPSSHESNEGVIEADNPKFSGFIFKIQANMNPAHRDRIAFIRICSGEFERGMNVTLTRTGKSMKLANSTQFMADDRETVNRAVAGDIIGLYDTGNYQIGDTITNGSKKLEFEKLPQFTPELFMRVYAKNVMKQKHFHKGVEQLVQEGAIQLFKTWRTEEYIIGAVGQLQFEVFEHRMRGEYNSEIRMEPIGKKIARWVKEEDADEKLSTARSMLVKDRFDQPLFLFENEFAINWFNDKNPDIELTSLL</sequence>
<proteinExistence type="inferred from homology"/>
<gene>
    <name evidence="1" type="primary">prfC</name>
    <name type="ordered locus">LMHCC_1634</name>
</gene>
<dbReference type="EMBL" id="CP001175">
    <property type="protein sequence ID" value="ACK39976.1"/>
    <property type="molecule type" value="Genomic_DNA"/>
</dbReference>
<dbReference type="RefSeq" id="WP_003727054.1">
    <property type="nucleotide sequence ID" value="NC_011660.1"/>
</dbReference>
<dbReference type="SMR" id="B8DEE7"/>
<dbReference type="KEGG" id="lmh:LMHCC_1634"/>
<dbReference type="HOGENOM" id="CLU_002794_2_1_9"/>
<dbReference type="GO" id="GO:0005829">
    <property type="term" value="C:cytosol"/>
    <property type="evidence" value="ECO:0007669"/>
    <property type="project" value="TreeGrafter"/>
</dbReference>
<dbReference type="GO" id="GO:0005525">
    <property type="term" value="F:GTP binding"/>
    <property type="evidence" value="ECO:0007669"/>
    <property type="project" value="UniProtKB-UniRule"/>
</dbReference>
<dbReference type="GO" id="GO:0003924">
    <property type="term" value="F:GTPase activity"/>
    <property type="evidence" value="ECO:0007669"/>
    <property type="project" value="InterPro"/>
</dbReference>
<dbReference type="GO" id="GO:0016150">
    <property type="term" value="F:translation release factor activity, codon nonspecific"/>
    <property type="evidence" value="ECO:0007669"/>
    <property type="project" value="TreeGrafter"/>
</dbReference>
<dbReference type="GO" id="GO:0016149">
    <property type="term" value="F:translation release factor activity, codon specific"/>
    <property type="evidence" value="ECO:0007669"/>
    <property type="project" value="UniProtKB-UniRule"/>
</dbReference>
<dbReference type="GO" id="GO:0006449">
    <property type="term" value="P:regulation of translational termination"/>
    <property type="evidence" value="ECO:0007669"/>
    <property type="project" value="UniProtKB-UniRule"/>
</dbReference>
<dbReference type="CDD" id="cd04169">
    <property type="entry name" value="RF3"/>
    <property type="match status" value="1"/>
</dbReference>
<dbReference type="CDD" id="cd03689">
    <property type="entry name" value="RF3_II"/>
    <property type="match status" value="1"/>
</dbReference>
<dbReference type="CDD" id="cd16259">
    <property type="entry name" value="RF3_III"/>
    <property type="match status" value="1"/>
</dbReference>
<dbReference type="FunFam" id="2.40.30.10:FF:000040">
    <property type="entry name" value="Peptide chain release factor 3"/>
    <property type="match status" value="1"/>
</dbReference>
<dbReference type="FunFam" id="3.30.70.3280:FF:000001">
    <property type="entry name" value="Peptide chain release factor 3"/>
    <property type="match status" value="1"/>
</dbReference>
<dbReference type="FunFam" id="3.40.50.300:FF:000542">
    <property type="entry name" value="Peptide chain release factor 3"/>
    <property type="match status" value="1"/>
</dbReference>
<dbReference type="Gene3D" id="3.40.50.300">
    <property type="entry name" value="P-loop containing nucleotide triphosphate hydrolases"/>
    <property type="match status" value="1"/>
</dbReference>
<dbReference type="Gene3D" id="3.30.70.3280">
    <property type="entry name" value="Peptide chain release factor 3, domain III"/>
    <property type="match status" value="1"/>
</dbReference>
<dbReference type="Gene3D" id="2.40.30.10">
    <property type="entry name" value="Translation factors"/>
    <property type="match status" value="1"/>
</dbReference>
<dbReference type="HAMAP" id="MF_00072">
    <property type="entry name" value="Rel_fac_3"/>
    <property type="match status" value="1"/>
</dbReference>
<dbReference type="InterPro" id="IPR053905">
    <property type="entry name" value="EF-G-like_DII"/>
</dbReference>
<dbReference type="InterPro" id="IPR035647">
    <property type="entry name" value="EFG_III/V"/>
</dbReference>
<dbReference type="InterPro" id="IPR031157">
    <property type="entry name" value="G_TR_CS"/>
</dbReference>
<dbReference type="InterPro" id="IPR027417">
    <property type="entry name" value="P-loop_NTPase"/>
</dbReference>
<dbReference type="InterPro" id="IPR004548">
    <property type="entry name" value="PrfC"/>
</dbReference>
<dbReference type="InterPro" id="IPR032090">
    <property type="entry name" value="RF3_C"/>
</dbReference>
<dbReference type="InterPro" id="IPR038467">
    <property type="entry name" value="RF3_dom_3_sf"/>
</dbReference>
<dbReference type="InterPro" id="IPR041732">
    <property type="entry name" value="RF3_GTP-bd"/>
</dbReference>
<dbReference type="InterPro" id="IPR005225">
    <property type="entry name" value="Small_GTP-bd"/>
</dbReference>
<dbReference type="InterPro" id="IPR000795">
    <property type="entry name" value="T_Tr_GTP-bd_dom"/>
</dbReference>
<dbReference type="InterPro" id="IPR009000">
    <property type="entry name" value="Transl_B-barrel_sf"/>
</dbReference>
<dbReference type="NCBIfam" id="TIGR00503">
    <property type="entry name" value="prfC"/>
    <property type="match status" value="1"/>
</dbReference>
<dbReference type="NCBIfam" id="NF001964">
    <property type="entry name" value="PRK00741.1"/>
    <property type="match status" value="1"/>
</dbReference>
<dbReference type="NCBIfam" id="TIGR00231">
    <property type="entry name" value="small_GTP"/>
    <property type="match status" value="1"/>
</dbReference>
<dbReference type="PANTHER" id="PTHR43556">
    <property type="entry name" value="PEPTIDE CHAIN RELEASE FACTOR RF3"/>
    <property type="match status" value="1"/>
</dbReference>
<dbReference type="PANTHER" id="PTHR43556:SF2">
    <property type="entry name" value="PEPTIDE CHAIN RELEASE FACTOR RF3"/>
    <property type="match status" value="1"/>
</dbReference>
<dbReference type="Pfam" id="PF22042">
    <property type="entry name" value="EF-G_D2"/>
    <property type="match status" value="1"/>
</dbReference>
<dbReference type="Pfam" id="PF00009">
    <property type="entry name" value="GTP_EFTU"/>
    <property type="match status" value="1"/>
</dbReference>
<dbReference type="Pfam" id="PF16658">
    <property type="entry name" value="RF3_C"/>
    <property type="match status" value="1"/>
</dbReference>
<dbReference type="PRINTS" id="PR00315">
    <property type="entry name" value="ELONGATNFCT"/>
</dbReference>
<dbReference type="SUPFAM" id="SSF54980">
    <property type="entry name" value="EF-G C-terminal domain-like"/>
    <property type="match status" value="1"/>
</dbReference>
<dbReference type="SUPFAM" id="SSF52540">
    <property type="entry name" value="P-loop containing nucleoside triphosphate hydrolases"/>
    <property type="match status" value="1"/>
</dbReference>
<dbReference type="SUPFAM" id="SSF50447">
    <property type="entry name" value="Translation proteins"/>
    <property type="match status" value="1"/>
</dbReference>
<dbReference type="PROSITE" id="PS00301">
    <property type="entry name" value="G_TR_1"/>
    <property type="match status" value="1"/>
</dbReference>
<dbReference type="PROSITE" id="PS51722">
    <property type="entry name" value="G_TR_2"/>
    <property type="match status" value="1"/>
</dbReference>
<comment type="function">
    <text evidence="1">Increases the formation of ribosomal termination complexes and stimulates activities of RF-1 and RF-2. It binds guanine nucleotides and has strong preference for UGA stop codons. It may interact directly with the ribosome. The stimulation of RF-1 and RF-2 is significantly reduced by GTP and GDP, but not by GMP.</text>
</comment>
<comment type="subcellular location">
    <subcellularLocation>
        <location evidence="1">Cytoplasm</location>
    </subcellularLocation>
</comment>
<comment type="similarity">
    <text evidence="1">Belongs to the TRAFAC class translation factor GTPase superfamily. Classic translation factor GTPase family. PrfC subfamily.</text>
</comment>
<organism>
    <name type="scientific">Listeria monocytogenes serotype 4a (strain HCC23)</name>
    <dbReference type="NCBI Taxonomy" id="552536"/>
    <lineage>
        <taxon>Bacteria</taxon>
        <taxon>Bacillati</taxon>
        <taxon>Bacillota</taxon>
        <taxon>Bacilli</taxon>
        <taxon>Bacillales</taxon>
        <taxon>Listeriaceae</taxon>
        <taxon>Listeria</taxon>
    </lineage>
</organism>
<accession>B8DEE7</accession>
<protein>
    <recommendedName>
        <fullName evidence="1">Peptide chain release factor 3</fullName>
        <shortName evidence="1">RF-3</shortName>
    </recommendedName>
</protein>
<feature type="chain" id="PRO_1000193530" description="Peptide chain release factor 3">
    <location>
        <begin position="1"/>
        <end position="522"/>
    </location>
</feature>
<feature type="domain" description="tr-type G">
    <location>
        <begin position="10"/>
        <end position="277"/>
    </location>
</feature>
<feature type="binding site" evidence="1">
    <location>
        <begin position="19"/>
        <end position="26"/>
    </location>
    <ligand>
        <name>GTP</name>
        <dbReference type="ChEBI" id="CHEBI:37565"/>
    </ligand>
</feature>
<feature type="binding site" evidence="1">
    <location>
        <begin position="87"/>
        <end position="91"/>
    </location>
    <ligand>
        <name>GTP</name>
        <dbReference type="ChEBI" id="CHEBI:37565"/>
    </ligand>
</feature>
<feature type="binding site" evidence="1">
    <location>
        <begin position="141"/>
        <end position="144"/>
    </location>
    <ligand>
        <name>GTP</name>
        <dbReference type="ChEBI" id="CHEBI:37565"/>
    </ligand>
</feature>